<organism>
    <name type="scientific">Mycoplasmopsis agalactiae (strain NCTC 10123 / CIP 59.7 / PG2)</name>
    <name type="common">Mycoplasma agalactiae</name>
    <dbReference type="NCBI Taxonomy" id="347257"/>
    <lineage>
        <taxon>Bacteria</taxon>
        <taxon>Bacillati</taxon>
        <taxon>Mycoplasmatota</taxon>
        <taxon>Mycoplasmoidales</taxon>
        <taxon>Metamycoplasmataceae</taxon>
        <taxon>Mycoplasmopsis</taxon>
    </lineage>
</organism>
<gene>
    <name evidence="1" type="primary">rplL</name>
    <name type="ordered locus">MAG6180</name>
</gene>
<comment type="function">
    <text evidence="1">Forms part of the ribosomal stalk which helps the ribosome interact with GTP-bound translation factors. Is thus essential for accurate translation.</text>
</comment>
<comment type="subunit">
    <text evidence="1">Homodimer. Part of the ribosomal stalk of the 50S ribosomal subunit. Forms a multimeric L10(L12)X complex, where L10 forms an elongated spine to which 2 to 4 L12 dimers bind in a sequential fashion. Binds GTP-bound translation factors.</text>
</comment>
<comment type="similarity">
    <text evidence="1">Belongs to the bacterial ribosomal protein bL12 family.</text>
</comment>
<sequence length="123" mass="12993">MAKLTKESFISSLKEMSIKEVMELVEAMKEEFGIDPSAVAVAAAAPAAEAEEKKSTLSVILKSDNGKKLAIVKAVKELLNLALMDANKLVSTLPATLKENIPAAEAEALKAKLVEAGADVELK</sequence>
<reference key="1">
    <citation type="journal article" date="2007" name="PLoS Genet.">
        <title>Being pathogenic, plastic, and sexual while living with a nearly minimal bacterial genome.</title>
        <authorList>
            <person name="Sirand-Pugnet P."/>
            <person name="Lartigue C."/>
            <person name="Marenda M."/>
            <person name="Jacob D."/>
            <person name="Barre A."/>
            <person name="Barbe V."/>
            <person name="Schenowitz C."/>
            <person name="Mangenot S."/>
            <person name="Couloux A."/>
            <person name="Segurens B."/>
            <person name="de Daruvar A."/>
            <person name="Blanchard A."/>
            <person name="Citti C."/>
        </authorList>
    </citation>
    <scope>NUCLEOTIDE SEQUENCE [LARGE SCALE GENOMIC DNA]</scope>
    <source>
        <strain>NCTC 10123 / CIP 59.7 / PG2</strain>
    </source>
</reference>
<evidence type="ECO:0000255" key="1">
    <source>
        <dbReference type="HAMAP-Rule" id="MF_00368"/>
    </source>
</evidence>
<evidence type="ECO:0000305" key="2"/>
<name>RL7_MYCAP</name>
<accession>A5IZ59</accession>
<keyword id="KW-1185">Reference proteome</keyword>
<keyword id="KW-0687">Ribonucleoprotein</keyword>
<keyword id="KW-0689">Ribosomal protein</keyword>
<proteinExistence type="inferred from homology"/>
<protein>
    <recommendedName>
        <fullName evidence="1">Large ribosomal subunit protein bL12</fullName>
    </recommendedName>
    <alternativeName>
        <fullName evidence="2">50S ribosomal protein L7/L12</fullName>
    </alternativeName>
</protein>
<feature type="chain" id="PRO_1000195809" description="Large ribosomal subunit protein bL12">
    <location>
        <begin position="1"/>
        <end position="123"/>
    </location>
</feature>
<dbReference type="EMBL" id="CU179680">
    <property type="protein sequence ID" value="CAL59318.1"/>
    <property type="molecule type" value="Genomic_DNA"/>
</dbReference>
<dbReference type="RefSeq" id="WP_004024017.1">
    <property type="nucleotide sequence ID" value="NC_009497.1"/>
</dbReference>
<dbReference type="SMR" id="A5IZ59"/>
<dbReference type="STRING" id="347257.MAG6180"/>
<dbReference type="GeneID" id="93358351"/>
<dbReference type="KEGG" id="maa:MAG6180"/>
<dbReference type="HOGENOM" id="CLU_086499_3_2_14"/>
<dbReference type="Proteomes" id="UP000007065">
    <property type="component" value="Chromosome"/>
</dbReference>
<dbReference type="GO" id="GO:0022625">
    <property type="term" value="C:cytosolic large ribosomal subunit"/>
    <property type="evidence" value="ECO:0007669"/>
    <property type="project" value="TreeGrafter"/>
</dbReference>
<dbReference type="GO" id="GO:0003729">
    <property type="term" value="F:mRNA binding"/>
    <property type="evidence" value="ECO:0007669"/>
    <property type="project" value="TreeGrafter"/>
</dbReference>
<dbReference type="GO" id="GO:0003735">
    <property type="term" value="F:structural constituent of ribosome"/>
    <property type="evidence" value="ECO:0007669"/>
    <property type="project" value="InterPro"/>
</dbReference>
<dbReference type="GO" id="GO:0006412">
    <property type="term" value="P:translation"/>
    <property type="evidence" value="ECO:0007669"/>
    <property type="project" value="UniProtKB-UniRule"/>
</dbReference>
<dbReference type="Gene3D" id="3.30.1390.10">
    <property type="match status" value="1"/>
</dbReference>
<dbReference type="Gene3D" id="1.20.5.710">
    <property type="entry name" value="Single helix bin"/>
    <property type="match status" value="1"/>
</dbReference>
<dbReference type="HAMAP" id="MF_00368">
    <property type="entry name" value="Ribosomal_bL12"/>
    <property type="match status" value="1"/>
</dbReference>
<dbReference type="InterPro" id="IPR000206">
    <property type="entry name" value="Ribosomal_bL12"/>
</dbReference>
<dbReference type="InterPro" id="IPR013823">
    <property type="entry name" value="Ribosomal_bL12_C"/>
</dbReference>
<dbReference type="InterPro" id="IPR014719">
    <property type="entry name" value="Ribosomal_bL12_C/ClpS-like"/>
</dbReference>
<dbReference type="InterPro" id="IPR008932">
    <property type="entry name" value="Ribosomal_bL12_oligo"/>
</dbReference>
<dbReference type="InterPro" id="IPR036235">
    <property type="entry name" value="Ribosomal_bL12_oligo_N_sf"/>
</dbReference>
<dbReference type="NCBIfam" id="TIGR00855">
    <property type="entry name" value="L12"/>
    <property type="match status" value="1"/>
</dbReference>
<dbReference type="PANTHER" id="PTHR45987">
    <property type="entry name" value="39S RIBOSOMAL PROTEIN L12"/>
    <property type="match status" value="1"/>
</dbReference>
<dbReference type="PANTHER" id="PTHR45987:SF4">
    <property type="entry name" value="LARGE RIBOSOMAL SUBUNIT PROTEIN BL12M"/>
    <property type="match status" value="1"/>
</dbReference>
<dbReference type="Pfam" id="PF00542">
    <property type="entry name" value="Ribosomal_L12"/>
    <property type="match status" value="1"/>
</dbReference>
<dbReference type="Pfam" id="PF16320">
    <property type="entry name" value="Ribosomal_L12_N"/>
    <property type="match status" value="1"/>
</dbReference>
<dbReference type="SUPFAM" id="SSF54736">
    <property type="entry name" value="ClpS-like"/>
    <property type="match status" value="1"/>
</dbReference>
<dbReference type="SUPFAM" id="SSF48300">
    <property type="entry name" value="Ribosomal protein L7/12, oligomerisation (N-terminal) domain"/>
    <property type="match status" value="1"/>
</dbReference>